<evidence type="ECO:0000255" key="1">
    <source>
        <dbReference type="PROSITE-ProRule" id="PRU00285"/>
    </source>
</evidence>
<evidence type="ECO:0000256" key="2">
    <source>
        <dbReference type="SAM" id="MobiDB-lite"/>
    </source>
</evidence>
<gene>
    <name type="primary">hspG2</name>
    <name type="ORF">DDB_G0276003</name>
</gene>
<organism>
    <name type="scientific">Dictyostelium discoideum</name>
    <name type="common">Social amoeba</name>
    <dbReference type="NCBI Taxonomy" id="44689"/>
    <lineage>
        <taxon>Eukaryota</taxon>
        <taxon>Amoebozoa</taxon>
        <taxon>Evosea</taxon>
        <taxon>Eumycetozoa</taxon>
        <taxon>Dictyostelia</taxon>
        <taxon>Dictyosteliales</taxon>
        <taxon>Dictyosteliaceae</taxon>
        <taxon>Dictyostelium</taxon>
    </lineage>
</organism>
<name>HSPG2_DICDI</name>
<protein>
    <recommendedName>
        <fullName>Small heat shock protein hspG2</fullName>
    </recommendedName>
</protein>
<dbReference type="EMBL" id="AAFI02000013">
    <property type="protein sequence ID" value="EAL69458.1"/>
    <property type="molecule type" value="Genomic_DNA"/>
</dbReference>
<dbReference type="RefSeq" id="XP_643373.1">
    <property type="nucleotide sequence ID" value="XM_638281.1"/>
</dbReference>
<dbReference type="SMR" id="Q552K9"/>
<dbReference type="STRING" id="44689.Q552K9"/>
<dbReference type="PaxDb" id="44689-DDB0232132"/>
<dbReference type="EnsemblProtists" id="EAL69458">
    <property type="protein sequence ID" value="EAL69458"/>
    <property type="gene ID" value="DDB_G0276003"/>
</dbReference>
<dbReference type="GeneID" id="8620257"/>
<dbReference type="KEGG" id="ddi:DDB_G0276003"/>
<dbReference type="dictyBase" id="DDB_G0276003">
    <property type="gene designation" value="hspG2"/>
</dbReference>
<dbReference type="VEuPathDB" id="AmoebaDB:DDB_G0276003"/>
<dbReference type="eggNOG" id="KOG0710">
    <property type="taxonomic scope" value="Eukaryota"/>
</dbReference>
<dbReference type="HOGENOM" id="CLU_1328489_0_0_1"/>
<dbReference type="InParanoid" id="Q552K9"/>
<dbReference type="OMA" id="YEDDTKL"/>
<dbReference type="PhylomeDB" id="Q552K9"/>
<dbReference type="PRO" id="PR:Q552K9"/>
<dbReference type="Proteomes" id="UP000002195">
    <property type="component" value="Chromosome 2"/>
</dbReference>
<dbReference type="CDD" id="cd06464">
    <property type="entry name" value="ACD_sHsps-like"/>
    <property type="match status" value="1"/>
</dbReference>
<dbReference type="Gene3D" id="2.60.40.790">
    <property type="match status" value="1"/>
</dbReference>
<dbReference type="InterPro" id="IPR002068">
    <property type="entry name" value="A-crystallin/Hsp20_dom"/>
</dbReference>
<dbReference type="InterPro" id="IPR008978">
    <property type="entry name" value="HSP20-like_chaperone"/>
</dbReference>
<dbReference type="InterPro" id="IPR051779">
    <property type="entry name" value="HspG1-11-like"/>
</dbReference>
<dbReference type="PANTHER" id="PTHR46827">
    <property type="entry name" value="HEAT SHOCK PROTEIN DDB_G0288861-RELATED"/>
    <property type="match status" value="1"/>
</dbReference>
<dbReference type="PANTHER" id="PTHR46827:SF1">
    <property type="entry name" value="HEAT SHOCK PROTEIN DDB_G0288861-RELATED"/>
    <property type="match status" value="1"/>
</dbReference>
<dbReference type="Pfam" id="PF00011">
    <property type="entry name" value="HSP20"/>
    <property type="match status" value="1"/>
</dbReference>
<dbReference type="SUPFAM" id="SSF49764">
    <property type="entry name" value="HSP20-like chaperones"/>
    <property type="match status" value="1"/>
</dbReference>
<dbReference type="PROSITE" id="PS01031">
    <property type="entry name" value="SHSP"/>
    <property type="match status" value="1"/>
</dbReference>
<accession>Q552K9</accession>
<feature type="chain" id="PRO_0000363894" description="Small heat shock protein hspG2">
    <location>
        <begin position="1"/>
        <end position="200"/>
    </location>
</feature>
<feature type="domain" description="sHSP" evidence="1">
    <location>
        <begin position="33"/>
        <end position="200"/>
    </location>
</feature>
<feature type="region of interest" description="Disordered" evidence="2">
    <location>
        <begin position="86"/>
        <end position="139"/>
    </location>
</feature>
<feature type="compositionally biased region" description="Low complexity" evidence="2">
    <location>
        <begin position="88"/>
        <end position="101"/>
    </location>
</feature>
<feature type="compositionally biased region" description="Acidic residues" evidence="2">
    <location>
        <begin position="106"/>
        <end position="117"/>
    </location>
</feature>
<proteinExistence type="inferred from homology"/>
<reference key="1">
    <citation type="journal article" date="2002" name="Nature">
        <title>Sequence and analysis of chromosome 2 of Dictyostelium discoideum.</title>
        <authorList>
            <person name="Gloeckner G."/>
            <person name="Eichinger L."/>
            <person name="Szafranski K."/>
            <person name="Pachebat J.A."/>
            <person name="Bankier A.T."/>
            <person name="Dear P.H."/>
            <person name="Lehmann R."/>
            <person name="Baumgart C."/>
            <person name="Parra G."/>
            <person name="Abril J.F."/>
            <person name="Guigo R."/>
            <person name="Kumpf K."/>
            <person name="Tunggal B."/>
            <person name="Cox E.C."/>
            <person name="Quail M.A."/>
            <person name="Platzer M."/>
            <person name="Rosenthal A."/>
            <person name="Noegel A.A."/>
        </authorList>
    </citation>
    <scope>NUCLEOTIDE SEQUENCE [LARGE SCALE GENOMIC DNA]</scope>
    <source>
        <strain>AX4</strain>
    </source>
</reference>
<reference key="2">
    <citation type="journal article" date="2005" name="Nature">
        <title>The genome of the social amoeba Dictyostelium discoideum.</title>
        <authorList>
            <person name="Eichinger L."/>
            <person name="Pachebat J.A."/>
            <person name="Gloeckner G."/>
            <person name="Rajandream M.A."/>
            <person name="Sucgang R."/>
            <person name="Berriman M."/>
            <person name="Song J."/>
            <person name="Olsen R."/>
            <person name="Szafranski K."/>
            <person name="Xu Q."/>
            <person name="Tunggal B."/>
            <person name="Kummerfeld S."/>
            <person name="Madera M."/>
            <person name="Konfortov B.A."/>
            <person name="Rivero F."/>
            <person name="Bankier A.T."/>
            <person name="Lehmann R."/>
            <person name="Hamlin N."/>
            <person name="Davies R."/>
            <person name="Gaudet P."/>
            <person name="Fey P."/>
            <person name="Pilcher K."/>
            <person name="Chen G."/>
            <person name="Saunders D."/>
            <person name="Sodergren E.J."/>
            <person name="Davis P."/>
            <person name="Kerhornou A."/>
            <person name="Nie X."/>
            <person name="Hall N."/>
            <person name="Anjard C."/>
            <person name="Hemphill L."/>
            <person name="Bason N."/>
            <person name="Farbrother P."/>
            <person name="Desany B."/>
            <person name="Just E."/>
            <person name="Morio T."/>
            <person name="Rost R."/>
            <person name="Churcher C.M."/>
            <person name="Cooper J."/>
            <person name="Haydock S."/>
            <person name="van Driessche N."/>
            <person name="Cronin A."/>
            <person name="Goodhead I."/>
            <person name="Muzny D.M."/>
            <person name="Mourier T."/>
            <person name="Pain A."/>
            <person name="Lu M."/>
            <person name="Harper D."/>
            <person name="Lindsay R."/>
            <person name="Hauser H."/>
            <person name="James K.D."/>
            <person name="Quiles M."/>
            <person name="Madan Babu M."/>
            <person name="Saito T."/>
            <person name="Buchrieser C."/>
            <person name="Wardroper A."/>
            <person name="Felder M."/>
            <person name="Thangavelu M."/>
            <person name="Johnson D."/>
            <person name="Knights A."/>
            <person name="Loulseged H."/>
            <person name="Mungall K.L."/>
            <person name="Oliver K."/>
            <person name="Price C."/>
            <person name="Quail M.A."/>
            <person name="Urushihara H."/>
            <person name="Hernandez J."/>
            <person name="Rabbinowitsch E."/>
            <person name="Steffen D."/>
            <person name="Sanders M."/>
            <person name="Ma J."/>
            <person name="Kohara Y."/>
            <person name="Sharp S."/>
            <person name="Simmonds M.N."/>
            <person name="Spiegler S."/>
            <person name="Tivey A."/>
            <person name="Sugano S."/>
            <person name="White B."/>
            <person name="Walker D."/>
            <person name="Woodward J.R."/>
            <person name="Winckler T."/>
            <person name="Tanaka Y."/>
            <person name="Shaulsky G."/>
            <person name="Schleicher M."/>
            <person name="Weinstock G.M."/>
            <person name="Rosenthal A."/>
            <person name="Cox E.C."/>
            <person name="Chisholm R.L."/>
            <person name="Gibbs R.A."/>
            <person name="Loomis W.F."/>
            <person name="Platzer M."/>
            <person name="Kay R.R."/>
            <person name="Williams J.G."/>
            <person name="Dear P.H."/>
            <person name="Noegel A.A."/>
            <person name="Barrell B.G."/>
            <person name="Kuspa A."/>
        </authorList>
    </citation>
    <scope>NUCLEOTIDE SEQUENCE [LARGE SCALE GENOMIC DNA]</scope>
    <source>
        <strain>AX4</strain>
    </source>
</reference>
<sequence>MATIFDILKTLNNNNNNINNNKIESCKRQYTVNKRIDIIPSMDVTMTNDKLIIETELPGVSKNDIDINIKDSILIIQGEKKNNIIKLQQQQQQQSEKSSQSTNNKDDDEPSIEEYEDDTKLKSNLNKNTENKDENKTTSSITNKKFISERSFGNFKRYLNLSEILYQLDLNSINTQFENGLLTITINKKSDNFQIKLKSI</sequence>
<comment type="similarity">
    <text evidence="1">Belongs to the small heat shock protein (HSP20) family.</text>
</comment>
<keyword id="KW-1185">Reference proteome</keyword>
<keyword id="KW-0346">Stress response</keyword>